<accession>A4YBI7</accession>
<dbReference type="EC" id="4.2.1.9" evidence="1"/>
<dbReference type="EMBL" id="CP000681">
    <property type="protein sequence ID" value="ABP77320.1"/>
    <property type="molecule type" value="Genomic_DNA"/>
</dbReference>
<dbReference type="SMR" id="A4YBI7"/>
<dbReference type="STRING" id="319224.Sputcn32_3612"/>
<dbReference type="KEGG" id="spc:Sputcn32_3612"/>
<dbReference type="eggNOG" id="COG0129">
    <property type="taxonomic scope" value="Bacteria"/>
</dbReference>
<dbReference type="HOGENOM" id="CLU_014271_4_2_6"/>
<dbReference type="UniPathway" id="UPA00047">
    <property type="reaction ID" value="UER00057"/>
</dbReference>
<dbReference type="UniPathway" id="UPA00049">
    <property type="reaction ID" value="UER00061"/>
</dbReference>
<dbReference type="GO" id="GO:0005829">
    <property type="term" value="C:cytosol"/>
    <property type="evidence" value="ECO:0007669"/>
    <property type="project" value="TreeGrafter"/>
</dbReference>
<dbReference type="GO" id="GO:0051537">
    <property type="term" value="F:2 iron, 2 sulfur cluster binding"/>
    <property type="evidence" value="ECO:0007669"/>
    <property type="project" value="UniProtKB-UniRule"/>
</dbReference>
<dbReference type="GO" id="GO:0004160">
    <property type="term" value="F:dihydroxy-acid dehydratase activity"/>
    <property type="evidence" value="ECO:0007669"/>
    <property type="project" value="UniProtKB-UniRule"/>
</dbReference>
<dbReference type="GO" id="GO:0000287">
    <property type="term" value="F:magnesium ion binding"/>
    <property type="evidence" value="ECO:0007669"/>
    <property type="project" value="UniProtKB-UniRule"/>
</dbReference>
<dbReference type="GO" id="GO:0009097">
    <property type="term" value="P:isoleucine biosynthetic process"/>
    <property type="evidence" value="ECO:0007669"/>
    <property type="project" value="UniProtKB-UniRule"/>
</dbReference>
<dbReference type="GO" id="GO:0009099">
    <property type="term" value="P:L-valine biosynthetic process"/>
    <property type="evidence" value="ECO:0007669"/>
    <property type="project" value="UniProtKB-UniRule"/>
</dbReference>
<dbReference type="FunFam" id="3.50.30.80:FF:000001">
    <property type="entry name" value="Dihydroxy-acid dehydratase"/>
    <property type="match status" value="1"/>
</dbReference>
<dbReference type="Gene3D" id="3.50.30.80">
    <property type="entry name" value="IlvD/EDD C-terminal domain-like"/>
    <property type="match status" value="1"/>
</dbReference>
<dbReference type="HAMAP" id="MF_00012">
    <property type="entry name" value="IlvD"/>
    <property type="match status" value="1"/>
</dbReference>
<dbReference type="InterPro" id="IPR042096">
    <property type="entry name" value="Dihydro-acid_dehy_C"/>
</dbReference>
<dbReference type="InterPro" id="IPR004404">
    <property type="entry name" value="DihydroxyA_deHydtase"/>
</dbReference>
<dbReference type="InterPro" id="IPR020558">
    <property type="entry name" value="DiOHA_6PGluconate_deHydtase_CS"/>
</dbReference>
<dbReference type="InterPro" id="IPR056740">
    <property type="entry name" value="ILV_EDD_C"/>
</dbReference>
<dbReference type="InterPro" id="IPR000581">
    <property type="entry name" value="ILV_EDD_N"/>
</dbReference>
<dbReference type="InterPro" id="IPR037237">
    <property type="entry name" value="IlvD/EDD_N"/>
</dbReference>
<dbReference type="NCBIfam" id="TIGR00110">
    <property type="entry name" value="ilvD"/>
    <property type="match status" value="1"/>
</dbReference>
<dbReference type="NCBIfam" id="NF009103">
    <property type="entry name" value="PRK12448.1"/>
    <property type="match status" value="1"/>
</dbReference>
<dbReference type="PANTHER" id="PTHR43661">
    <property type="entry name" value="D-XYLONATE DEHYDRATASE"/>
    <property type="match status" value="1"/>
</dbReference>
<dbReference type="PANTHER" id="PTHR43661:SF3">
    <property type="entry name" value="D-XYLONATE DEHYDRATASE YAGF-RELATED"/>
    <property type="match status" value="1"/>
</dbReference>
<dbReference type="Pfam" id="PF24877">
    <property type="entry name" value="ILV_EDD_C"/>
    <property type="match status" value="1"/>
</dbReference>
<dbReference type="Pfam" id="PF00920">
    <property type="entry name" value="ILVD_EDD_N"/>
    <property type="match status" value="1"/>
</dbReference>
<dbReference type="SUPFAM" id="SSF143975">
    <property type="entry name" value="IlvD/EDD N-terminal domain-like"/>
    <property type="match status" value="1"/>
</dbReference>
<dbReference type="SUPFAM" id="SSF52016">
    <property type="entry name" value="LeuD/IlvD-like"/>
    <property type="match status" value="1"/>
</dbReference>
<dbReference type="PROSITE" id="PS00886">
    <property type="entry name" value="ILVD_EDD_1"/>
    <property type="match status" value="1"/>
</dbReference>
<dbReference type="PROSITE" id="PS00887">
    <property type="entry name" value="ILVD_EDD_2"/>
    <property type="match status" value="1"/>
</dbReference>
<gene>
    <name evidence="1" type="primary">ilvD</name>
    <name type="ordered locus">Sputcn32_3612</name>
</gene>
<organism>
    <name type="scientific">Shewanella putrefaciens (strain CN-32 / ATCC BAA-453)</name>
    <dbReference type="NCBI Taxonomy" id="319224"/>
    <lineage>
        <taxon>Bacteria</taxon>
        <taxon>Pseudomonadati</taxon>
        <taxon>Pseudomonadota</taxon>
        <taxon>Gammaproteobacteria</taxon>
        <taxon>Alteromonadales</taxon>
        <taxon>Shewanellaceae</taxon>
        <taxon>Shewanella</taxon>
    </lineage>
</organism>
<protein>
    <recommendedName>
        <fullName evidence="1">Dihydroxy-acid dehydratase</fullName>
        <shortName evidence="1">DAD</shortName>
        <ecNumber evidence="1">4.2.1.9</ecNumber>
    </recommendedName>
</protein>
<evidence type="ECO:0000255" key="1">
    <source>
        <dbReference type="HAMAP-Rule" id="MF_00012"/>
    </source>
</evidence>
<feature type="chain" id="PRO_1000001055" description="Dihydroxy-acid dehydratase">
    <location>
        <begin position="1"/>
        <end position="619"/>
    </location>
</feature>
<feature type="active site" description="Proton acceptor" evidence="1">
    <location>
        <position position="520"/>
    </location>
</feature>
<feature type="binding site" evidence="1">
    <location>
        <position position="81"/>
    </location>
    <ligand>
        <name>Mg(2+)</name>
        <dbReference type="ChEBI" id="CHEBI:18420"/>
    </ligand>
</feature>
<feature type="binding site" evidence="1">
    <location>
        <position position="122"/>
    </location>
    <ligand>
        <name>[2Fe-2S] cluster</name>
        <dbReference type="ChEBI" id="CHEBI:190135"/>
    </ligand>
</feature>
<feature type="binding site" evidence="1">
    <location>
        <position position="123"/>
    </location>
    <ligand>
        <name>Mg(2+)</name>
        <dbReference type="ChEBI" id="CHEBI:18420"/>
    </ligand>
</feature>
<feature type="binding site" description="via carbamate group" evidence="1">
    <location>
        <position position="124"/>
    </location>
    <ligand>
        <name>Mg(2+)</name>
        <dbReference type="ChEBI" id="CHEBI:18420"/>
    </ligand>
</feature>
<feature type="binding site" evidence="1">
    <location>
        <position position="195"/>
    </location>
    <ligand>
        <name>[2Fe-2S] cluster</name>
        <dbReference type="ChEBI" id="CHEBI:190135"/>
    </ligand>
</feature>
<feature type="binding site" evidence="1">
    <location>
        <position position="494"/>
    </location>
    <ligand>
        <name>Mg(2+)</name>
        <dbReference type="ChEBI" id="CHEBI:18420"/>
    </ligand>
</feature>
<feature type="modified residue" description="N6-carboxylysine" evidence="1">
    <location>
        <position position="124"/>
    </location>
</feature>
<comment type="function">
    <text evidence="1">Functions in the biosynthesis of branched-chain amino acids. Catalyzes the dehydration of (2R,3R)-2,3-dihydroxy-3-methylpentanoate (2,3-dihydroxy-3-methylvalerate) into 2-oxo-3-methylpentanoate (2-oxo-3-methylvalerate) and of (2R)-2,3-dihydroxy-3-methylbutanoate (2,3-dihydroxyisovalerate) into 2-oxo-3-methylbutanoate (2-oxoisovalerate), the penultimate precursor to L-isoleucine and L-valine, respectively.</text>
</comment>
<comment type="catalytic activity">
    <reaction evidence="1">
        <text>(2R)-2,3-dihydroxy-3-methylbutanoate = 3-methyl-2-oxobutanoate + H2O</text>
        <dbReference type="Rhea" id="RHEA:24809"/>
        <dbReference type="ChEBI" id="CHEBI:11851"/>
        <dbReference type="ChEBI" id="CHEBI:15377"/>
        <dbReference type="ChEBI" id="CHEBI:49072"/>
        <dbReference type="EC" id="4.2.1.9"/>
    </reaction>
    <physiologicalReaction direction="left-to-right" evidence="1">
        <dbReference type="Rhea" id="RHEA:24810"/>
    </physiologicalReaction>
</comment>
<comment type="catalytic activity">
    <reaction evidence="1">
        <text>(2R,3R)-2,3-dihydroxy-3-methylpentanoate = (S)-3-methyl-2-oxopentanoate + H2O</text>
        <dbReference type="Rhea" id="RHEA:27694"/>
        <dbReference type="ChEBI" id="CHEBI:15377"/>
        <dbReference type="ChEBI" id="CHEBI:35146"/>
        <dbReference type="ChEBI" id="CHEBI:49258"/>
        <dbReference type="EC" id="4.2.1.9"/>
    </reaction>
    <physiologicalReaction direction="left-to-right" evidence="1">
        <dbReference type="Rhea" id="RHEA:27695"/>
    </physiologicalReaction>
</comment>
<comment type="cofactor">
    <cofactor evidence="1">
        <name>[2Fe-2S] cluster</name>
        <dbReference type="ChEBI" id="CHEBI:190135"/>
    </cofactor>
    <text evidence="1">Binds 1 [2Fe-2S] cluster per subunit. This cluster acts as a Lewis acid cofactor.</text>
</comment>
<comment type="cofactor">
    <cofactor evidence="1">
        <name>Mg(2+)</name>
        <dbReference type="ChEBI" id="CHEBI:18420"/>
    </cofactor>
</comment>
<comment type="pathway">
    <text evidence="1">Amino-acid biosynthesis; L-isoleucine biosynthesis; L-isoleucine from 2-oxobutanoate: step 3/4.</text>
</comment>
<comment type="pathway">
    <text evidence="1">Amino-acid biosynthesis; L-valine biosynthesis; L-valine from pyruvate: step 3/4.</text>
</comment>
<comment type="subunit">
    <text evidence="1">Homodimer.</text>
</comment>
<comment type="similarity">
    <text evidence="1">Belongs to the IlvD/Edd family.</text>
</comment>
<keyword id="KW-0001">2Fe-2S</keyword>
<keyword id="KW-0028">Amino-acid biosynthesis</keyword>
<keyword id="KW-0100">Branched-chain amino acid biosynthesis</keyword>
<keyword id="KW-0408">Iron</keyword>
<keyword id="KW-0411">Iron-sulfur</keyword>
<keyword id="KW-0456">Lyase</keyword>
<keyword id="KW-0460">Magnesium</keyword>
<keyword id="KW-0479">Metal-binding</keyword>
<sequence length="619" mass="65799">MPKLRSATSTEGRNMAGARALWRATGVKDNDFGKPIIAIANSFTQFVPGHVHLKDMGSLVASAIEEAGGIAKEFNTIAVDDGIAMGHGGMLYSLPSRELIADSVEYMVNAHCADALVCISNCDKITPGMLMAALRLNIPVVFVSGGPMEAGKTKLSDKLIKLDLVDAMVAGADSNVSDEDSAKIERSACPTCGSCSGMFTANSMNCLTEALGLSLPGNGSMLATHADRRELFLEAGRRVMVLAKRYYHQDDESALPRNIANFKAFENAMTLDIAMGGSSNTVLHLLAAAQEADVDFTMADIDRMSRLVPHLCKVAPSTPKYHMEDVHRAGGVMGILGELDRAGLLHTDVFHVAADEGGNLKSVLAKYDVMQTQDEKVKHFFMAGPAGIPTTKAFSQDCRWPSLDNDRQEGCIRSREFAFSQEGGLAVLSGNVAENGCIVKTAGVDESNLTFVGSARVYESQDDAVAGILGGEVVAGDVVVIRYEGPKGGPGMQEMLYPTSYLKSRGLGKACALITDGRFSGGTSGLSIGHVSPEAAAGGTIALIENGDRIEIDIPKRSIKLAISDAELNARREAMLARGPMAWKPIGRERYVSLALKAYAMLATSADKGAVRDRSKLED</sequence>
<proteinExistence type="inferred from homology"/>
<name>ILVD_SHEPC</name>
<reference key="1">
    <citation type="submission" date="2007-04" db="EMBL/GenBank/DDBJ databases">
        <title>Complete sequence of Shewanella putrefaciens CN-32.</title>
        <authorList>
            <consortium name="US DOE Joint Genome Institute"/>
            <person name="Copeland A."/>
            <person name="Lucas S."/>
            <person name="Lapidus A."/>
            <person name="Barry K."/>
            <person name="Detter J.C."/>
            <person name="Glavina del Rio T."/>
            <person name="Hammon N."/>
            <person name="Israni S."/>
            <person name="Dalin E."/>
            <person name="Tice H."/>
            <person name="Pitluck S."/>
            <person name="Chain P."/>
            <person name="Malfatti S."/>
            <person name="Shin M."/>
            <person name="Vergez L."/>
            <person name="Schmutz J."/>
            <person name="Larimer F."/>
            <person name="Land M."/>
            <person name="Hauser L."/>
            <person name="Kyrpides N."/>
            <person name="Mikhailova N."/>
            <person name="Romine M.F."/>
            <person name="Fredrickson J."/>
            <person name="Tiedje J."/>
            <person name="Richardson P."/>
        </authorList>
    </citation>
    <scope>NUCLEOTIDE SEQUENCE [LARGE SCALE GENOMIC DNA]</scope>
    <source>
        <strain>CN-32 / ATCC BAA-453</strain>
    </source>
</reference>